<name>URE2_CERS1</name>
<dbReference type="EC" id="3.5.1.5" evidence="1"/>
<dbReference type="EMBL" id="CP000577">
    <property type="protein sequence ID" value="ABN77057.1"/>
    <property type="molecule type" value="Genomic_DNA"/>
</dbReference>
<dbReference type="RefSeq" id="WP_002720474.1">
    <property type="nucleotide sequence ID" value="NC_009049.1"/>
</dbReference>
<dbReference type="SMR" id="A3PL41"/>
<dbReference type="KEGG" id="rsh:Rsph17029_1953"/>
<dbReference type="HOGENOM" id="CLU_129707_1_1_5"/>
<dbReference type="UniPathway" id="UPA00258">
    <property type="reaction ID" value="UER00370"/>
</dbReference>
<dbReference type="GO" id="GO:0035550">
    <property type="term" value="C:urease complex"/>
    <property type="evidence" value="ECO:0007669"/>
    <property type="project" value="InterPro"/>
</dbReference>
<dbReference type="GO" id="GO:0009039">
    <property type="term" value="F:urease activity"/>
    <property type="evidence" value="ECO:0007669"/>
    <property type="project" value="UniProtKB-UniRule"/>
</dbReference>
<dbReference type="GO" id="GO:0043419">
    <property type="term" value="P:urea catabolic process"/>
    <property type="evidence" value="ECO:0007669"/>
    <property type="project" value="UniProtKB-UniRule"/>
</dbReference>
<dbReference type="CDD" id="cd00407">
    <property type="entry name" value="Urease_beta"/>
    <property type="match status" value="1"/>
</dbReference>
<dbReference type="FunFam" id="2.10.150.10:FF:000001">
    <property type="entry name" value="Urease subunit beta"/>
    <property type="match status" value="1"/>
</dbReference>
<dbReference type="Gene3D" id="2.10.150.10">
    <property type="entry name" value="Urease, beta subunit"/>
    <property type="match status" value="1"/>
</dbReference>
<dbReference type="HAMAP" id="MF_01954">
    <property type="entry name" value="Urease_beta"/>
    <property type="match status" value="1"/>
</dbReference>
<dbReference type="InterPro" id="IPR002019">
    <property type="entry name" value="Urease_beta-like"/>
</dbReference>
<dbReference type="InterPro" id="IPR036461">
    <property type="entry name" value="Urease_betasu_sf"/>
</dbReference>
<dbReference type="InterPro" id="IPR050069">
    <property type="entry name" value="Urease_subunit"/>
</dbReference>
<dbReference type="NCBIfam" id="NF009682">
    <property type="entry name" value="PRK13203.1"/>
    <property type="match status" value="1"/>
</dbReference>
<dbReference type="NCBIfam" id="TIGR00192">
    <property type="entry name" value="urease_beta"/>
    <property type="match status" value="1"/>
</dbReference>
<dbReference type="PANTHER" id="PTHR33569">
    <property type="entry name" value="UREASE"/>
    <property type="match status" value="1"/>
</dbReference>
<dbReference type="PANTHER" id="PTHR33569:SF1">
    <property type="entry name" value="UREASE"/>
    <property type="match status" value="1"/>
</dbReference>
<dbReference type="Pfam" id="PF00699">
    <property type="entry name" value="Urease_beta"/>
    <property type="match status" value="1"/>
</dbReference>
<dbReference type="SUPFAM" id="SSF51278">
    <property type="entry name" value="Urease, beta-subunit"/>
    <property type="match status" value="1"/>
</dbReference>
<gene>
    <name evidence="1" type="primary">ureB</name>
    <name type="ordered locus">Rsph17029_1953</name>
</gene>
<proteinExistence type="inferred from homology"/>
<sequence length="101" mass="11088">MIPGELFPAEGEILLNAERAQITLVVSNAGDRPVQVGSHYHFAETNPALEFDREAARGMRLDIPAGTAVRFEPGQTREVRLVSYAGSREVYGFNGRIMGKL</sequence>
<organism>
    <name type="scientific">Cereibacter sphaeroides (strain ATCC 17029 / ATH 2.4.9)</name>
    <name type="common">Rhodobacter sphaeroides</name>
    <dbReference type="NCBI Taxonomy" id="349101"/>
    <lineage>
        <taxon>Bacteria</taxon>
        <taxon>Pseudomonadati</taxon>
        <taxon>Pseudomonadota</taxon>
        <taxon>Alphaproteobacteria</taxon>
        <taxon>Rhodobacterales</taxon>
        <taxon>Paracoccaceae</taxon>
        <taxon>Cereibacter</taxon>
    </lineage>
</organism>
<protein>
    <recommendedName>
        <fullName evidence="1">Urease subunit beta</fullName>
        <ecNumber evidence="1">3.5.1.5</ecNumber>
    </recommendedName>
    <alternativeName>
        <fullName evidence="1">Urea amidohydrolase subunit beta</fullName>
    </alternativeName>
</protein>
<keyword id="KW-0963">Cytoplasm</keyword>
<keyword id="KW-0378">Hydrolase</keyword>
<comment type="catalytic activity">
    <reaction evidence="1">
        <text>urea + 2 H2O + H(+) = hydrogencarbonate + 2 NH4(+)</text>
        <dbReference type="Rhea" id="RHEA:20557"/>
        <dbReference type="ChEBI" id="CHEBI:15377"/>
        <dbReference type="ChEBI" id="CHEBI:15378"/>
        <dbReference type="ChEBI" id="CHEBI:16199"/>
        <dbReference type="ChEBI" id="CHEBI:17544"/>
        <dbReference type="ChEBI" id="CHEBI:28938"/>
        <dbReference type="EC" id="3.5.1.5"/>
    </reaction>
</comment>
<comment type="pathway">
    <text evidence="1">Nitrogen metabolism; urea degradation; CO(2) and NH(3) from urea (urease route): step 1/1.</text>
</comment>
<comment type="subunit">
    <text evidence="1">Heterotrimer of UreA (gamma), UreB (beta) and UreC (alpha) subunits. Three heterotrimers associate to form the active enzyme.</text>
</comment>
<comment type="subcellular location">
    <subcellularLocation>
        <location evidence="1">Cytoplasm</location>
    </subcellularLocation>
</comment>
<comment type="similarity">
    <text evidence="1">Belongs to the urease beta subunit family.</text>
</comment>
<feature type="chain" id="PRO_1000070769" description="Urease subunit beta">
    <location>
        <begin position="1"/>
        <end position="101"/>
    </location>
</feature>
<reference key="1">
    <citation type="submission" date="2007-02" db="EMBL/GenBank/DDBJ databases">
        <title>Complete sequence of chromosome 1 of Rhodobacter sphaeroides ATCC 17029.</title>
        <authorList>
            <person name="Copeland A."/>
            <person name="Lucas S."/>
            <person name="Lapidus A."/>
            <person name="Barry K."/>
            <person name="Detter J.C."/>
            <person name="Glavina del Rio T."/>
            <person name="Hammon N."/>
            <person name="Israni S."/>
            <person name="Dalin E."/>
            <person name="Tice H."/>
            <person name="Pitluck S."/>
            <person name="Kiss H."/>
            <person name="Brettin T."/>
            <person name="Bruce D."/>
            <person name="Han C."/>
            <person name="Tapia R."/>
            <person name="Gilna P."/>
            <person name="Schmutz J."/>
            <person name="Larimer F."/>
            <person name="Land M."/>
            <person name="Hauser L."/>
            <person name="Kyrpides N."/>
            <person name="Mikhailova N."/>
            <person name="Richardson P."/>
            <person name="Mackenzie C."/>
            <person name="Choudhary M."/>
            <person name="Donohue T.J."/>
            <person name="Kaplan S."/>
        </authorList>
    </citation>
    <scope>NUCLEOTIDE SEQUENCE [LARGE SCALE GENOMIC DNA]</scope>
    <source>
        <strain>ATCC 17029 / ATH 2.4.9</strain>
    </source>
</reference>
<accession>A3PL41</accession>
<evidence type="ECO:0000255" key="1">
    <source>
        <dbReference type="HAMAP-Rule" id="MF_01954"/>
    </source>
</evidence>